<sequence length="364" mass="39702">MTVPTTIRLPSKQTVILEGDDLRLRIDDNAPLPVLRPDEVLVRTMAVAINPCDYKMHERFPSPGAVDGCDFSGVILAIGAGVPSLGVSFQIGDRVCGAVHGSNPIRHDSGSFAEYIASEAEFTLKIPDSMSFEEAAALGGTGLATLGMALFRTLELPGTPEEPAQKPLTVLVHGGSSSVGTMAMQLLRLVGHIPITTCSPRNFALAKEYGAEEIFDYHEPDCGQKIKAYTRNTLRYVLDPFTDAKSIALCCGAMGRAGGRYACLEMYPDYLVEKRTLRVGFVMGPALLGHRLELDYGYERAADPEMRQFGIRWYRSIQWLLSKGQLKPHPLRVLPGRFDAILQGIEMLKSKSVSGEKLVVSIGM</sequence>
<evidence type="ECO:0000250" key="1">
    <source>
        <dbReference type="UniProtKB" id="Q9Y7D0"/>
    </source>
</evidence>
<evidence type="ECO:0000255" key="2"/>
<evidence type="ECO:0000269" key="3">
    <source>
    </source>
</evidence>
<evidence type="ECO:0000269" key="4">
    <source>
    </source>
</evidence>
<evidence type="ECO:0000269" key="5">
    <source>
    </source>
</evidence>
<evidence type="ECO:0000303" key="6">
    <source>
    </source>
</evidence>
<evidence type="ECO:0000305" key="7"/>
<evidence type="ECO:0000305" key="8">
    <source>
    </source>
</evidence>
<evidence type="ECO:0000305" key="9">
    <source>
    </source>
</evidence>
<keyword id="KW-0521">NADP</keyword>
<keyword id="KW-0547">Nucleotide-binding</keyword>
<keyword id="KW-0560">Oxidoreductase</keyword>
<keyword id="KW-1185">Reference proteome</keyword>
<protein>
    <recommendedName>
        <fullName evidence="6">Trans-enoyl reductase ccsC</fullName>
        <ecNumber evidence="8 9">1.-.-.-</ecNumber>
    </recommendedName>
    <alternativeName>
        <fullName evidence="6">Cytochalasin biosynthesis protein C</fullName>
    </alternativeName>
</protein>
<name>CCSC_ASPCL</name>
<gene>
    <name evidence="6" type="primary">ccsC</name>
    <name type="ORF">ACLA_078700</name>
</gene>
<reference key="1">
    <citation type="journal article" date="2008" name="PLoS Genet.">
        <title>Genomic islands in the pathogenic filamentous fungus Aspergillus fumigatus.</title>
        <authorList>
            <person name="Fedorova N.D."/>
            <person name="Khaldi N."/>
            <person name="Joardar V.S."/>
            <person name="Maiti R."/>
            <person name="Amedeo P."/>
            <person name="Anderson M.J."/>
            <person name="Crabtree J."/>
            <person name="Silva J.C."/>
            <person name="Badger J.H."/>
            <person name="Albarraq A."/>
            <person name="Angiuoli S."/>
            <person name="Bussey H."/>
            <person name="Bowyer P."/>
            <person name="Cotty P.J."/>
            <person name="Dyer P.S."/>
            <person name="Egan A."/>
            <person name="Galens K."/>
            <person name="Fraser-Liggett C.M."/>
            <person name="Haas B.J."/>
            <person name="Inman J.M."/>
            <person name="Kent R."/>
            <person name="Lemieux S."/>
            <person name="Malavazi I."/>
            <person name="Orvis J."/>
            <person name="Roemer T."/>
            <person name="Ronning C.M."/>
            <person name="Sundaram J.P."/>
            <person name="Sutton G."/>
            <person name="Turner G."/>
            <person name="Venter J.C."/>
            <person name="White O.R."/>
            <person name="Whitty B.R."/>
            <person name="Youngman P."/>
            <person name="Wolfe K.H."/>
            <person name="Goldman G.H."/>
            <person name="Wortman J.R."/>
            <person name="Jiang B."/>
            <person name="Denning D.W."/>
            <person name="Nierman W.C."/>
        </authorList>
    </citation>
    <scope>NUCLEOTIDE SEQUENCE [LARGE SCALE GENOMIC DNA]</scope>
    <source>
        <strain>ATCC 1007 / CBS 513.65 / DSM 816 / NCTC 3887 / NRRL 1 / QM 1276 / 107</strain>
    </source>
</reference>
<reference key="2">
    <citation type="journal article" date="2011" name="Metab. Eng.">
        <title>Identification and engineering of the cytochalasin gene cluster from Aspergillus clavatus NRRL 1.</title>
        <authorList>
            <person name="Qiao K."/>
            <person name="Chooi Y.H."/>
            <person name="Tang Y."/>
        </authorList>
    </citation>
    <scope>FUNCTION</scope>
    <scope>PATHWAY</scope>
    <source>
        <strain>ATCC 1007 / CBS 513.65 / DSM 816 / NCTC 3887 / NRRL 1</strain>
    </source>
</reference>
<reference key="3">
    <citation type="journal article" date="2014" name="Nat. Chem. Biol.">
        <title>A carbonate-forming Baeyer-Villiger monooxygenase.</title>
        <authorList>
            <person name="Hu Y."/>
            <person name="Dietrich D."/>
            <person name="Xu W."/>
            <person name="Patel A."/>
            <person name="Thuss J.A."/>
            <person name="Wang J."/>
            <person name="Yin W.B."/>
            <person name="Qiao K."/>
            <person name="Houk K.N."/>
            <person name="Vederas J.C."/>
            <person name="Tang Y."/>
        </authorList>
    </citation>
    <scope>FUNCTION</scope>
    <source>
        <strain>ATCC 1007 / CBS 513.65 / DSM 816 / NCTC 3887 / NRRL 1</strain>
    </source>
</reference>
<reference key="4">
    <citation type="journal article" date="2016" name="PLoS ONE">
        <title>Linker flexibility facilitates module exchange in fungal hybrid PKS-NRPS engineering.</title>
        <authorList>
            <person name="Nielsen M.L."/>
            <person name="Isbrandt T."/>
            <person name="Petersen L.M."/>
            <person name="Mortensen U.H."/>
            <person name="Andersen M.R."/>
            <person name="Hoof J.B."/>
            <person name="Larsen T.O."/>
        </authorList>
    </citation>
    <scope>FUNCTION</scope>
</reference>
<proteinExistence type="inferred from homology"/>
<dbReference type="EC" id="1.-.-.-" evidence="8 9"/>
<dbReference type="EMBL" id="DS027057">
    <property type="protein sequence ID" value="EAW09121.1"/>
    <property type="molecule type" value="Genomic_DNA"/>
</dbReference>
<dbReference type="RefSeq" id="XP_001270547.1">
    <property type="nucleotide sequence ID" value="XM_001270546.1"/>
</dbReference>
<dbReference type="SMR" id="A1CLZ2"/>
<dbReference type="STRING" id="344612.A1CLZ2"/>
<dbReference type="EnsemblFungi" id="EAW09121">
    <property type="protein sequence ID" value="EAW09121"/>
    <property type="gene ID" value="ACLA_078700"/>
</dbReference>
<dbReference type="GeneID" id="4702655"/>
<dbReference type="KEGG" id="act:ACLA_078700"/>
<dbReference type="VEuPathDB" id="FungiDB:ACLA_078700"/>
<dbReference type="eggNOG" id="KOG1198">
    <property type="taxonomic scope" value="Eukaryota"/>
</dbReference>
<dbReference type="HOGENOM" id="CLU_026673_16_1_1"/>
<dbReference type="OMA" id="DYKMHER"/>
<dbReference type="OrthoDB" id="48317at2759"/>
<dbReference type="Proteomes" id="UP000006701">
    <property type="component" value="Unassembled WGS sequence"/>
</dbReference>
<dbReference type="GO" id="GO:0000166">
    <property type="term" value="F:nucleotide binding"/>
    <property type="evidence" value="ECO:0007669"/>
    <property type="project" value="UniProtKB-KW"/>
</dbReference>
<dbReference type="GO" id="GO:0016651">
    <property type="term" value="F:oxidoreductase activity, acting on NAD(P)H"/>
    <property type="evidence" value="ECO:0007669"/>
    <property type="project" value="InterPro"/>
</dbReference>
<dbReference type="CDD" id="cd08249">
    <property type="entry name" value="enoyl_reductase_like"/>
    <property type="match status" value="1"/>
</dbReference>
<dbReference type="Gene3D" id="3.90.180.10">
    <property type="entry name" value="Medium-chain alcohol dehydrogenases, catalytic domain"/>
    <property type="match status" value="1"/>
</dbReference>
<dbReference type="Gene3D" id="3.40.50.720">
    <property type="entry name" value="NAD(P)-binding Rossmann-like Domain"/>
    <property type="match status" value="1"/>
</dbReference>
<dbReference type="InterPro" id="IPR013149">
    <property type="entry name" value="ADH-like_C"/>
</dbReference>
<dbReference type="InterPro" id="IPR013154">
    <property type="entry name" value="ADH-like_N"/>
</dbReference>
<dbReference type="InterPro" id="IPR011032">
    <property type="entry name" value="GroES-like_sf"/>
</dbReference>
<dbReference type="InterPro" id="IPR036291">
    <property type="entry name" value="NAD(P)-bd_dom_sf"/>
</dbReference>
<dbReference type="InterPro" id="IPR020843">
    <property type="entry name" value="PKS_ER"/>
</dbReference>
<dbReference type="InterPro" id="IPR047122">
    <property type="entry name" value="Trans-enoyl_RdTase-like"/>
</dbReference>
<dbReference type="PANTHER" id="PTHR45348">
    <property type="entry name" value="HYPOTHETICAL OXIDOREDUCTASE (EUROFUNG)"/>
    <property type="match status" value="1"/>
</dbReference>
<dbReference type="PANTHER" id="PTHR45348:SF1">
    <property type="entry name" value="TRANS-ENOYL REDUCTASE STHE"/>
    <property type="match status" value="1"/>
</dbReference>
<dbReference type="Pfam" id="PF08240">
    <property type="entry name" value="ADH_N"/>
    <property type="match status" value="1"/>
</dbReference>
<dbReference type="Pfam" id="PF00107">
    <property type="entry name" value="ADH_zinc_N"/>
    <property type="match status" value="1"/>
</dbReference>
<dbReference type="SMART" id="SM00829">
    <property type="entry name" value="PKS_ER"/>
    <property type="match status" value="1"/>
</dbReference>
<dbReference type="SUPFAM" id="SSF50129">
    <property type="entry name" value="GroES-like"/>
    <property type="match status" value="1"/>
</dbReference>
<dbReference type="SUPFAM" id="SSF51735">
    <property type="entry name" value="NAD(P)-binding Rossmann-fold domains"/>
    <property type="match status" value="1"/>
</dbReference>
<organism>
    <name type="scientific">Aspergillus clavatus (strain ATCC 1007 / CBS 513.65 / DSM 816 / NCTC 3887 / NRRL 1 / QM 1276 / 107)</name>
    <dbReference type="NCBI Taxonomy" id="344612"/>
    <lineage>
        <taxon>Eukaryota</taxon>
        <taxon>Fungi</taxon>
        <taxon>Dikarya</taxon>
        <taxon>Ascomycota</taxon>
        <taxon>Pezizomycotina</taxon>
        <taxon>Eurotiomycetes</taxon>
        <taxon>Eurotiomycetidae</taxon>
        <taxon>Eurotiales</taxon>
        <taxon>Aspergillaceae</taxon>
        <taxon>Aspergillus</taxon>
        <taxon>Aspergillus subgen. Fumigati</taxon>
    </lineage>
</organism>
<accession>A1CLZ2</accession>
<comment type="function">
    <text evidence="3 4 5">Trans-enoyl reductase; part of the gene cluster that mediates the biosynthesis of a family of the mycotoxins cytochalasins E and K (PubMed:21983160). The hybrid PKS-NRPS synthetase ccsA and the enoyl reductase ccsC are responsible for fusion of phenylalanine with an octaketide backbone and subsequent release of the stable tetramic acid precursor (PubMed:21983160, PubMed:27551732). The polyketide synthase module (PKS) of the PKS-NRPS ccsA is responsible for the synthesis of the octaketide backbone (PubMed:21983160). The downstream nonribosomal peptide synthetase (NRPS) amidates the carboxyl end of the octaketide with a phenylalanine (PubMed:21983160). A reductase-like domain (R) at the C-terminus catalyzes the reductive release of the polyketide-amino acid intermediate (PubMed:21983160). Because ccsA lacks a designated enoylreductase (ER) domain, the required activity is provided the enoyl reductase ccsC (PubMed:21983160, PubMed:27551732). Upon formation of the 11-membered carbocycle-fused perhydroisoindolone intermediate, a number of oxidative steps are required to afford the final cytochalasin E and K, including two hydroxylations at C17 and C18, one alcohol oxidation at C17, one epoxidation at C6 and C7 and two Baeyer-Villiger oxidations (PubMed:21983160). The oxidative modification at C17, C18 and the C6-C7 epoxidation are likely to be catalyzed by the two cytochrome P450 oxygenases ccsD and ccsG (PubMed:21983160). CcsD may be responsible for the epoxidation of the C6-C7 double bond (PubMed:21983160). CcsG may be responsible for the successive oxidative modifications at C17 and C18 (PubMed:21983160). The double Baeyer-Villiger oxidations of ketocytochalasin to precytochalasin and cytochalasin Z(16) are among the final steps leading to cytochalasin E and K and are catalyzed by ccsB (PubMed:21983160, PubMed:24838010). The first oxygen insertion step follows that of the classic BVMO mechanism, generating the ester precytochalasin (PubMed:24838010). Release of precytochalasin into an aqueous environment can generate the shunt product iso-precytochalasin through spontaneous isomerization (PubMed:24838010). Alternatively, precytochalasin can undergo further oxidation by ccsB to yield the in-line carbonate-containing cytochalasin Z(16) (PubMed:24838010). Cytochalasin Z(16) is a precursor to cytochalasin E and cytochalasin K, whereas iso-precytochalasin is a precursor to cytochalasin Z(17) and rosellichalasin (PubMed:21983160, PubMed:24838010). The hydrolyase ccsE may catalyze hydrolysis of epoxide bond in cytochalasin E to afford cytochalasin K (PubMed:21983160). The function of ccsF has not been assigned but it may play a role in post-PKS-NRPS biosynthetic step, resistance or transport of cytochalasins and related PKS-NRPS products (PubMed:21983160).</text>
</comment>
<comment type="pathway">
    <text evidence="8">Mycotoxin biosynthesis.</text>
</comment>
<comment type="subunit">
    <text evidence="1">Monomer.</text>
</comment>
<comment type="similarity">
    <text evidence="7">Belongs to the zinc-containing alcohol dehydrogenase family.</text>
</comment>
<feature type="chain" id="PRO_0000438565" description="Trans-enoyl reductase ccsC">
    <location>
        <begin position="1"/>
        <end position="364"/>
    </location>
</feature>
<feature type="binding site" evidence="1">
    <location>
        <begin position="52"/>
        <end position="55"/>
    </location>
    <ligand>
        <name>NADP(+)</name>
        <dbReference type="ChEBI" id="CHEBI:58349"/>
    </ligand>
</feature>
<feature type="binding site" evidence="2">
    <location>
        <begin position="141"/>
        <end position="148"/>
    </location>
    <ligand>
        <name>substrate</name>
    </ligand>
</feature>
<feature type="binding site" evidence="1">
    <location>
        <begin position="176"/>
        <end position="179"/>
    </location>
    <ligand>
        <name>NADP(+)</name>
        <dbReference type="ChEBI" id="CHEBI:58349"/>
    </ligand>
</feature>
<feature type="binding site" evidence="1">
    <location>
        <begin position="199"/>
        <end position="202"/>
    </location>
    <ligand>
        <name>NADP(+)</name>
        <dbReference type="ChEBI" id="CHEBI:58349"/>
    </ligand>
</feature>
<feature type="binding site" evidence="1">
    <location>
        <position position="217"/>
    </location>
    <ligand>
        <name>NADP(+)</name>
        <dbReference type="ChEBI" id="CHEBI:58349"/>
    </ligand>
</feature>
<feature type="binding site" evidence="1">
    <location>
        <begin position="264"/>
        <end position="265"/>
    </location>
    <ligand>
        <name>NADP(+)</name>
        <dbReference type="ChEBI" id="CHEBI:58349"/>
    </ligand>
</feature>
<feature type="binding site" evidence="2">
    <location>
        <begin position="284"/>
        <end position="288"/>
    </location>
    <ligand>
        <name>substrate</name>
    </ligand>
</feature>
<feature type="binding site" evidence="1">
    <location>
        <begin position="353"/>
        <end position="354"/>
    </location>
    <ligand>
        <name>NADP(+)</name>
        <dbReference type="ChEBI" id="CHEBI:58349"/>
    </ligand>
</feature>